<dbReference type="EC" id="1.17.99.6" evidence="1"/>
<dbReference type="EMBL" id="AE014299">
    <property type="protein sequence ID" value="AAN56837.1"/>
    <property type="molecule type" value="Genomic_DNA"/>
</dbReference>
<dbReference type="RefSeq" id="NP_719393.1">
    <property type="nucleotide sequence ID" value="NC_004347.2"/>
</dbReference>
<dbReference type="RefSeq" id="WP_011073619.1">
    <property type="nucleotide sequence ID" value="NC_004347.2"/>
</dbReference>
<dbReference type="SMR" id="Q8EAN7"/>
<dbReference type="STRING" id="211586.SO_3861"/>
<dbReference type="PaxDb" id="211586-SO_3861"/>
<dbReference type="KEGG" id="son:SO_3861"/>
<dbReference type="PATRIC" id="fig|211586.12.peg.3748"/>
<dbReference type="eggNOG" id="COG1600">
    <property type="taxonomic scope" value="Bacteria"/>
</dbReference>
<dbReference type="HOGENOM" id="CLU_030790_0_1_6"/>
<dbReference type="OrthoDB" id="9784571at2"/>
<dbReference type="PhylomeDB" id="Q8EAN7"/>
<dbReference type="BioCyc" id="SONE211586:G1GMP-3583-MONOMER"/>
<dbReference type="UniPathway" id="UPA00392"/>
<dbReference type="Proteomes" id="UP000008186">
    <property type="component" value="Chromosome"/>
</dbReference>
<dbReference type="GO" id="GO:0005737">
    <property type="term" value="C:cytoplasm"/>
    <property type="evidence" value="ECO:0007669"/>
    <property type="project" value="UniProtKB-SubCell"/>
</dbReference>
<dbReference type="GO" id="GO:0051539">
    <property type="term" value="F:4 iron, 4 sulfur cluster binding"/>
    <property type="evidence" value="ECO:0007669"/>
    <property type="project" value="UniProtKB-KW"/>
</dbReference>
<dbReference type="GO" id="GO:0052693">
    <property type="term" value="F:epoxyqueuosine reductase activity"/>
    <property type="evidence" value="ECO:0000318"/>
    <property type="project" value="GO_Central"/>
</dbReference>
<dbReference type="GO" id="GO:0046872">
    <property type="term" value="F:metal ion binding"/>
    <property type="evidence" value="ECO:0007669"/>
    <property type="project" value="UniProtKB-KW"/>
</dbReference>
<dbReference type="GO" id="GO:0008616">
    <property type="term" value="P:queuosine biosynthetic process"/>
    <property type="evidence" value="ECO:0000318"/>
    <property type="project" value="GO_Central"/>
</dbReference>
<dbReference type="GO" id="GO:0006400">
    <property type="term" value="P:tRNA modification"/>
    <property type="evidence" value="ECO:0007669"/>
    <property type="project" value="UniProtKB-UniRule"/>
</dbReference>
<dbReference type="FunFam" id="3.30.70.20:FF:000017">
    <property type="entry name" value="Epoxyqueuosine reductase"/>
    <property type="match status" value="1"/>
</dbReference>
<dbReference type="Gene3D" id="3.30.70.20">
    <property type="match status" value="1"/>
</dbReference>
<dbReference type="HAMAP" id="MF_00916">
    <property type="entry name" value="QueG"/>
    <property type="match status" value="1"/>
</dbReference>
<dbReference type="InterPro" id="IPR017896">
    <property type="entry name" value="4Fe4S_Fe-S-bd"/>
</dbReference>
<dbReference type="InterPro" id="IPR017900">
    <property type="entry name" value="4Fe4S_Fe_S_CS"/>
</dbReference>
<dbReference type="InterPro" id="IPR004453">
    <property type="entry name" value="QueG"/>
</dbReference>
<dbReference type="InterPro" id="IPR013542">
    <property type="entry name" value="QueG_DUF1730"/>
</dbReference>
<dbReference type="NCBIfam" id="TIGR00276">
    <property type="entry name" value="tRNA epoxyqueuosine(34) reductase QueG"/>
    <property type="match status" value="1"/>
</dbReference>
<dbReference type="PANTHER" id="PTHR30002">
    <property type="entry name" value="EPOXYQUEUOSINE REDUCTASE"/>
    <property type="match status" value="1"/>
</dbReference>
<dbReference type="PANTHER" id="PTHR30002:SF4">
    <property type="entry name" value="EPOXYQUEUOSINE REDUCTASE"/>
    <property type="match status" value="1"/>
</dbReference>
<dbReference type="Pfam" id="PF13484">
    <property type="entry name" value="Fer4_16"/>
    <property type="match status" value="1"/>
</dbReference>
<dbReference type="Pfam" id="PF08331">
    <property type="entry name" value="QueG_DUF1730"/>
    <property type="match status" value="1"/>
</dbReference>
<dbReference type="SUPFAM" id="SSF46548">
    <property type="entry name" value="alpha-helical ferredoxin"/>
    <property type="match status" value="1"/>
</dbReference>
<dbReference type="PROSITE" id="PS00198">
    <property type="entry name" value="4FE4S_FER_1"/>
    <property type="match status" value="1"/>
</dbReference>
<dbReference type="PROSITE" id="PS51379">
    <property type="entry name" value="4FE4S_FER_2"/>
    <property type="match status" value="1"/>
</dbReference>
<sequence>MSMTVTTSSNVSDAAMLSRLALQIKSWGKALGFAQIGICDTDLTAEEAKLQTWLDKGFHGEMAYMETHGMMRARPHELHSGTVRVISARMDYLPPEAGFATNLASPNMGYISRYAGGRDYHKLIRARLKKLGDQINSELVALGFDAADFRPFVDSAPVLERPLAEKAGIGWTGKHSLILNHDAGSWFFLGELLINLPLPVDIPVQEGCHSCVACITSCPTGAIVEPYTVDARRCISYLTIELQGAIPEEFRPLMGNRIYGCDDCQLVCPVNRAAPLTQESDFHIRPKLKQPELLTLFTWSETEFLKQTEGSAIRRIGHQRWLRNIAVALGNAPSSADIISALEQRKAQADVDEMVKEHIDWALAQQRAGDLQTNNRKTERLVRVIQKGLPRDA</sequence>
<organism>
    <name type="scientific">Shewanella oneidensis (strain ATCC 700550 / JCM 31522 / CIP 106686 / LMG 19005 / NCIMB 14063 / MR-1)</name>
    <dbReference type="NCBI Taxonomy" id="211586"/>
    <lineage>
        <taxon>Bacteria</taxon>
        <taxon>Pseudomonadati</taxon>
        <taxon>Pseudomonadota</taxon>
        <taxon>Gammaproteobacteria</taxon>
        <taxon>Alteromonadales</taxon>
        <taxon>Shewanellaceae</taxon>
        <taxon>Shewanella</taxon>
    </lineage>
</organism>
<reference key="1">
    <citation type="journal article" date="2002" name="Nat. Biotechnol.">
        <title>Genome sequence of the dissimilatory metal ion-reducing bacterium Shewanella oneidensis.</title>
        <authorList>
            <person name="Heidelberg J.F."/>
            <person name="Paulsen I.T."/>
            <person name="Nelson K.E."/>
            <person name="Gaidos E.J."/>
            <person name="Nelson W.C."/>
            <person name="Read T.D."/>
            <person name="Eisen J.A."/>
            <person name="Seshadri R."/>
            <person name="Ward N.L."/>
            <person name="Methe B.A."/>
            <person name="Clayton R.A."/>
            <person name="Meyer T."/>
            <person name="Tsapin A."/>
            <person name="Scott J."/>
            <person name="Beanan M.J."/>
            <person name="Brinkac L.M."/>
            <person name="Daugherty S.C."/>
            <person name="DeBoy R.T."/>
            <person name="Dodson R.J."/>
            <person name="Durkin A.S."/>
            <person name="Haft D.H."/>
            <person name="Kolonay J.F."/>
            <person name="Madupu R."/>
            <person name="Peterson J.D."/>
            <person name="Umayam L.A."/>
            <person name="White O."/>
            <person name="Wolf A.M."/>
            <person name="Vamathevan J.J."/>
            <person name="Weidman J.F."/>
            <person name="Impraim M."/>
            <person name="Lee K."/>
            <person name="Berry K.J."/>
            <person name="Lee C."/>
            <person name="Mueller J."/>
            <person name="Khouri H.M."/>
            <person name="Gill J."/>
            <person name="Utterback T.R."/>
            <person name="McDonald L.A."/>
            <person name="Feldblyum T.V."/>
            <person name="Smith H.O."/>
            <person name="Venter J.C."/>
            <person name="Nealson K.H."/>
            <person name="Fraser C.M."/>
        </authorList>
    </citation>
    <scope>NUCLEOTIDE SEQUENCE [LARGE SCALE GENOMIC DNA]</scope>
    <source>
        <strain>ATCC 700550 / JCM 31522 / CIP 106686 / LMG 19005 / NCIMB 14063 / MR-1</strain>
    </source>
</reference>
<gene>
    <name evidence="1" type="primary">queG</name>
    <name type="ordered locus">SO_3861</name>
</gene>
<keyword id="KW-0004">4Fe-4S</keyword>
<keyword id="KW-0963">Cytoplasm</keyword>
<keyword id="KW-0408">Iron</keyword>
<keyword id="KW-0411">Iron-sulfur</keyword>
<keyword id="KW-0479">Metal-binding</keyword>
<keyword id="KW-0560">Oxidoreductase</keyword>
<keyword id="KW-0671">Queuosine biosynthesis</keyword>
<keyword id="KW-1185">Reference proteome</keyword>
<keyword id="KW-0819">tRNA processing</keyword>
<accession>Q8EAN7</accession>
<name>QUEG_SHEON</name>
<proteinExistence type="inferred from homology"/>
<feature type="chain" id="PRO_0000416080" description="Epoxyqueuosine reductase">
    <location>
        <begin position="1"/>
        <end position="393"/>
    </location>
</feature>
<feature type="domain" description="4Fe-4S ferredoxin-type" evidence="1">
    <location>
        <begin position="196"/>
        <end position="228"/>
    </location>
</feature>
<feature type="active site" description="Proton donor" evidence="1">
    <location>
        <position position="154"/>
    </location>
</feature>
<feature type="binding site" evidence="1">
    <location>
        <position position="208"/>
    </location>
    <ligand>
        <name>[4Fe-4S] cluster</name>
        <dbReference type="ChEBI" id="CHEBI:49883"/>
        <label>1</label>
    </ligand>
</feature>
<feature type="binding site" evidence="1">
    <location>
        <position position="211"/>
    </location>
    <ligand>
        <name>[4Fe-4S] cluster</name>
        <dbReference type="ChEBI" id="CHEBI:49883"/>
        <label>1</label>
    </ligand>
</feature>
<feature type="binding site" evidence="1">
    <location>
        <position position="214"/>
    </location>
    <ligand>
        <name>[4Fe-4S] cluster</name>
        <dbReference type="ChEBI" id="CHEBI:49883"/>
        <label>1</label>
    </ligand>
</feature>
<feature type="binding site" evidence="1">
    <location>
        <position position="218"/>
    </location>
    <ligand>
        <name>[4Fe-4S] cluster</name>
        <dbReference type="ChEBI" id="CHEBI:49883"/>
        <label>2</label>
    </ligand>
</feature>
<feature type="binding site" evidence="1">
    <location>
        <position position="234"/>
    </location>
    <ligand>
        <name>[4Fe-4S] cluster</name>
        <dbReference type="ChEBI" id="CHEBI:49883"/>
        <label>2</label>
    </ligand>
</feature>
<feature type="binding site" evidence="1">
    <location>
        <position position="261"/>
    </location>
    <ligand>
        <name>[4Fe-4S] cluster</name>
        <dbReference type="ChEBI" id="CHEBI:49883"/>
        <label>2</label>
    </ligand>
</feature>
<feature type="binding site" evidence="1">
    <location>
        <position position="264"/>
    </location>
    <ligand>
        <name>[4Fe-4S] cluster</name>
        <dbReference type="ChEBI" id="CHEBI:49883"/>
        <label>2</label>
    </ligand>
</feature>
<feature type="binding site" evidence="1">
    <location>
        <position position="268"/>
    </location>
    <ligand>
        <name>[4Fe-4S] cluster</name>
        <dbReference type="ChEBI" id="CHEBI:49883"/>
        <label>1</label>
    </ligand>
</feature>
<protein>
    <recommendedName>
        <fullName evidence="1">Epoxyqueuosine reductase</fullName>
        <ecNumber evidence="1">1.17.99.6</ecNumber>
    </recommendedName>
    <alternativeName>
        <fullName evidence="1">Queuosine biosynthesis protein QueG</fullName>
    </alternativeName>
</protein>
<comment type="function">
    <text evidence="1">Catalyzes the conversion of epoxyqueuosine (oQ) to queuosine (Q), which is a hypermodified base found in the wobble positions of tRNA(Asp), tRNA(Asn), tRNA(His) and tRNA(Tyr).</text>
</comment>
<comment type="catalytic activity">
    <reaction evidence="1">
        <text>epoxyqueuosine(34) in tRNA + AH2 = queuosine(34) in tRNA + A + H2O</text>
        <dbReference type="Rhea" id="RHEA:32159"/>
        <dbReference type="Rhea" id="RHEA-COMP:18571"/>
        <dbReference type="Rhea" id="RHEA-COMP:18582"/>
        <dbReference type="ChEBI" id="CHEBI:13193"/>
        <dbReference type="ChEBI" id="CHEBI:15377"/>
        <dbReference type="ChEBI" id="CHEBI:17499"/>
        <dbReference type="ChEBI" id="CHEBI:194431"/>
        <dbReference type="ChEBI" id="CHEBI:194443"/>
        <dbReference type="EC" id="1.17.99.6"/>
    </reaction>
</comment>
<comment type="cofactor">
    <cofactor evidence="1">
        <name>cob(II)alamin</name>
        <dbReference type="ChEBI" id="CHEBI:16304"/>
    </cofactor>
</comment>
<comment type="cofactor">
    <cofactor evidence="1">
        <name>[4Fe-4S] cluster</name>
        <dbReference type="ChEBI" id="CHEBI:49883"/>
    </cofactor>
    <text evidence="1">Binds 2 [4Fe-4S] clusters per monomer.</text>
</comment>
<comment type="pathway">
    <text evidence="1">tRNA modification; tRNA-queuosine biosynthesis.</text>
</comment>
<comment type="subunit">
    <text evidence="1">Monomer.</text>
</comment>
<comment type="subcellular location">
    <subcellularLocation>
        <location evidence="1">Cytoplasm</location>
    </subcellularLocation>
</comment>
<comment type="similarity">
    <text evidence="1">Belongs to the QueG family.</text>
</comment>
<evidence type="ECO:0000255" key="1">
    <source>
        <dbReference type="HAMAP-Rule" id="MF_00916"/>
    </source>
</evidence>